<keyword id="KW-0963">Cytoplasm</keyword>
<keyword id="KW-0235">DNA replication</keyword>
<keyword id="KW-0239">DNA-directed DNA polymerase</keyword>
<keyword id="KW-0269">Exonuclease</keyword>
<keyword id="KW-0378">Hydrolase</keyword>
<keyword id="KW-0540">Nuclease</keyword>
<keyword id="KW-0548">Nucleotidyltransferase</keyword>
<keyword id="KW-0808">Transferase</keyword>
<gene>
    <name evidence="1" type="primary">polC</name>
    <name type="ordered locus">MGAS10270_Spy1740</name>
</gene>
<name>DPO3_STRPD</name>
<sequence>MSDLFAKLMDQIEMPLDMRRSSAFSSADIIEVKVHSVSRLWEFHFAFAAVLPIATYRELHDRLIRTFEAADIKVTFDIQAAQVDYSDDLLQAYYQEAFEHAPCNSASFKSSFSKLKVTYEDDKLIIAAPGFVNNDHFRKNHLPNLVKQFEAFGFGTLTIDMVSDQEMTEHLTKDFVSSRQALVEKAVQDNLEAQKSLEAMMPPAEEATPAPKFDYKERVAQRQAGFEKAAITPMIEIETEENRIVFEGMVFDVERKTTRTGRHIINFKMTDYTSSFALQKWAKDDEELRKFDMIAKGAWLRVQGNIETNPFTKSLTMNVQQVKEIVHHDRKDLMPEGQKRVEFHAHTNMSTMDALPTVESLIDTAAKWGHKAVAITDHANVQSFPHGYHRARKAGIKAIFGLEANIVEDKVPISYDPVDMDLHEATYVVFDVETTGLSAMNNDLIQIAASKMFKGNIVEQFDEFIDPGHPLSAFTTELTGITDKHLQDAKPLVTVLKAFQDFCKDSILVAHNASFDVGFMNANYERHDLPKITQPVIDTLEFARNLYPEYKRHGLGPLTKRFQVSLDHHHMANYDAEATGRLLFIFLKDAREKHGIKNLLQLNTDLVAEDSYKKARIKHATIYVQNQVGLKNMFKLVSLSNIKYFEGVPRIPRTVLDAHREGLLLGTACSDGEVFDAVLTKGIDAAVDLAKYYDFIEIMPPAIYQPLVVRELIKDQAGIEQVIRDLIEVGKRANKPVLATGNVHYLEPEEEIYREIIVRSLGQGAMINRTIGRGEGAQPAPLPKAHFRTTNEMLDEFAFLGKDLAYQVVVENTQDFADRIEEVEVVKGDLYTPYIDKAEETVAELTYQKAFEIYGNPLPDIIDLRIEKELTSILGNGFAVIYLASQMLVNRSNERGYLVGSRGSVGSSFVATMIGITEVNPMPPHYVCPSCQHSEFITDGSVGSGYDLPNKPCPKCGTPYQKDGQDIPFETFLGFDGDKVPDIDLNFSGDDQPSAHLDVRDIFGDEYAFRAGTVGTVAEKTAYGFVKGYERDYGKFYRDAEVDRLAAGAAGVKRTTGQHPGGIVVIPNYMDVYDFTPVQYPADDVTASWQTTHFNFHDIDENVLKLDILGHDDPTMIRKLQDLSGIDPITIPADDPGVMALFSGTEVLGVTPEQIGTPTGMLGIPEFGTNFVRGMVNETHPTTFAELLQLSGLSHGTDVWLGNAQDLIKEGIATLKTVIGCRDDIMVYLMHAGLEPKMAFTIMERVRKGLWLKISEEERNGYIDAMRENNVPDWYIESCGKIKYMFPKAHAAAYVLMALRVAYFKVHHPIMYYCAYFSIRAKAFELKTMSGGLDAVKARMEDITIKRKNNEATNVENDLFTTLEIVNEMLERGFKFGKLDLYKSDAIEFQIKGDTLIPPFIALEGLGENVGKQIVKARQEGEFLSKMELRKRGGASSTLVEKMDEMGILGNMPEDNQLSLFDDFF</sequence>
<protein>
    <recommendedName>
        <fullName evidence="1">DNA polymerase III PolC-type</fullName>
        <shortName evidence="1">PolIII</shortName>
        <ecNumber evidence="1">2.7.7.7</ecNumber>
    </recommendedName>
</protein>
<dbReference type="EC" id="2.7.7.7" evidence="1"/>
<dbReference type="EMBL" id="CP000260">
    <property type="protein sequence ID" value="ABF34805.1"/>
    <property type="molecule type" value="Genomic_DNA"/>
</dbReference>
<dbReference type="SMR" id="Q1JEV4"/>
<dbReference type="KEGG" id="sph:MGAS10270_Spy1740"/>
<dbReference type="HOGENOM" id="CLU_003297_2_0_9"/>
<dbReference type="Proteomes" id="UP000002436">
    <property type="component" value="Chromosome"/>
</dbReference>
<dbReference type="GO" id="GO:0005737">
    <property type="term" value="C:cytoplasm"/>
    <property type="evidence" value="ECO:0007669"/>
    <property type="project" value="UniProtKB-SubCell"/>
</dbReference>
<dbReference type="GO" id="GO:0008408">
    <property type="term" value="F:3'-5' exonuclease activity"/>
    <property type="evidence" value="ECO:0007669"/>
    <property type="project" value="UniProtKB-UniRule"/>
</dbReference>
<dbReference type="GO" id="GO:0003677">
    <property type="term" value="F:DNA binding"/>
    <property type="evidence" value="ECO:0007669"/>
    <property type="project" value="UniProtKB-UniRule"/>
</dbReference>
<dbReference type="GO" id="GO:0003887">
    <property type="term" value="F:DNA-directed DNA polymerase activity"/>
    <property type="evidence" value="ECO:0007669"/>
    <property type="project" value="UniProtKB-UniRule"/>
</dbReference>
<dbReference type="GO" id="GO:0006261">
    <property type="term" value="P:DNA-templated DNA replication"/>
    <property type="evidence" value="ECO:0007669"/>
    <property type="project" value="UniProtKB-UniRule"/>
</dbReference>
<dbReference type="CDD" id="cd06127">
    <property type="entry name" value="DEDDh"/>
    <property type="match status" value="1"/>
</dbReference>
<dbReference type="CDD" id="cd07435">
    <property type="entry name" value="PHP_PolIIIA_POLC"/>
    <property type="match status" value="1"/>
</dbReference>
<dbReference type="CDD" id="cd04484">
    <property type="entry name" value="polC_OBF"/>
    <property type="match status" value="1"/>
</dbReference>
<dbReference type="FunFam" id="3.30.420.10:FF:000045">
    <property type="entry name" value="3'-5' exonuclease DinG"/>
    <property type="match status" value="1"/>
</dbReference>
<dbReference type="Gene3D" id="1.10.150.870">
    <property type="match status" value="1"/>
</dbReference>
<dbReference type="Gene3D" id="3.30.1900.20">
    <property type="match status" value="1"/>
</dbReference>
<dbReference type="Gene3D" id="6.10.140.1510">
    <property type="match status" value="1"/>
</dbReference>
<dbReference type="Gene3D" id="3.20.20.140">
    <property type="entry name" value="Metal-dependent hydrolases"/>
    <property type="match status" value="1"/>
</dbReference>
<dbReference type="Gene3D" id="2.40.50.140">
    <property type="entry name" value="Nucleic acid-binding proteins"/>
    <property type="match status" value="1"/>
</dbReference>
<dbReference type="Gene3D" id="1.10.150.700">
    <property type="entry name" value="PolC, middle finger domain"/>
    <property type="match status" value="1"/>
</dbReference>
<dbReference type="Gene3D" id="3.30.420.10">
    <property type="entry name" value="Ribonuclease H-like superfamily/Ribonuclease H"/>
    <property type="match status" value="1"/>
</dbReference>
<dbReference type="HAMAP" id="MF_00356">
    <property type="entry name" value="DNApol_PolC"/>
    <property type="match status" value="1"/>
</dbReference>
<dbReference type="InterPro" id="IPR011708">
    <property type="entry name" value="DNA_pol3_alpha_NTPase_dom"/>
</dbReference>
<dbReference type="InterPro" id="IPR040982">
    <property type="entry name" value="DNA_pol3_finger"/>
</dbReference>
<dbReference type="InterPro" id="IPR024754">
    <property type="entry name" value="DNA_PolC-like_N_II"/>
</dbReference>
<dbReference type="InterPro" id="IPR028112">
    <property type="entry name" value="DNA_PolC-type_N_I"/>
</dbReference>
<dbReference type="InterPro" id="IPR004805">
    <property type="entry name" value="DnaE2/DnaE/PolC"/>
</dbReference>
<dbReference type="InterPro" id="IPR029460">
    <property type="entry name" value="DNAPol_HHH"/>
</dbReference>
<dbReference type="InterPro" id="IPR006054">
    <property type="entry name" value="DnaQ"/>
</dbReference>
<dbReference type="InterPro" id="IPR013520">
    <property type="entry name" value="Exonuclease_RNaseT/DNA_pol3"/>
</dbReference>
<dbReference type="InterPro" id="IPR012340">
    <property type="entry name" value="NA-bd_OB-fold"/>
</dbReference>
<dbReference type="InterPro" id="IPR004013">
    <property type="entry name" value="PHP_dom"/>
</dbReference>
<dbReference type="InterPro" id="IPR003141">
    <property type="entry name" value="Pol/His_phosphatase_N"/>
</dbReference>
<dbReference type="InterPro" id="IPR016195">
    <property type="entry name" value="Pol/histidinol_Pase-like"/>
</dbReference>
<dbReference type="InterPro" id="IPR006308">
    <property type="entry name" value="Pol_III_a_PolC-type_gram_pos"/>
</dbReference>
<dbReference type="InterPro" id="IPR044923">
    <property type="entry name" value="PolC_middle_finger_sf"/>
</dbReference>
<dbReference type="InterPro" id="IPR012337">
    <property type="entry name" value="RNaseH-like_sf"/>
</dbReference>
<dbReference type="InterPro" id="IPR036397">
    <property type="entry name" value="RNaseH_sf"/>
</dbReference>
<dbReference type="NCBIfam" id="TIGR00573">
    <property type="entry name" value="dnaq"/>
    <property type="match status" value="1"/>
</dbReference>
<dbReference type="NCBIfam" id="TIGR01405">
    <property type="entry name" value="polC_Gram_pos"/>
    <property type="match status" value="1"/>
</dbReference>
<dbReference type="NCBIfam" id="NF001688">
    <property type="entry name" value="PRK00448.1"/>
    <property type="match status" value="1"/>
</dbReference>
<dbReference type="PANTHER" id="PTHR32294:SF5">
    <property type="entry name" value="DNA POLYMERASE III POLC-TYPE"/>
    <property type="match status" value="1"/>
</dbReference>
<dbReference type="PANTHER" id="PTHR32294">
    <property type="entry name" value="DNA POLYMERASE III SUBUNIT ALPHA"/>
    <property type="match status" value="1"/>
</dbReference>
<dbReference type="Pfam" id="PF14480">
    <property type="entry name" value="DNA_pol3_a_NI"/>
    <property type="match status" value="1"/>
</dbReference>
<dbReference type="Pfam" id="PF11490">
    <property type="entry name" value="DNA_pol3_a_NII"/>
    <property type="match status" value="1"/>
</dbReference>
<dbReference type="Pfam" id="PF07733">
    <property type="entry name" value="DNA_pol3_alpha"/>
    <property type="match status" value="2"/>
</dbReference>
<dbReference type="Pfam" id="PF17657">
    <property type="entry name" value="DNA_pol3_finger"/>
    <property type="match status" value="1"/>
</dbReference>
<dbReference type="Pfam" id="PF14579">
    <property type="entry name" value="HHH_6"/>
    <property type="match status" value="1"/>
</dbReference>
<dbReference type="Pfam" id="PF02811">
    <property type="entry name" value="PHP"/>
    <property type="match status" value="2"/>
</dbReference>
<dbReference type="Pfam" id="PF00929">
    <property type="entry name" value="RNase_T"/>
    <property type="match status" value="1"/>
</dbReference>
<dbReference type="SMART" id="SM00479">
    <property type="entry name" value="EXOIII"/>
    <property type="match status" value="1"/>
</dbReference>
<dbReference type="SMART" id="SM00481">
    <property type="entry name" value="POLIIIAc"/>
    <property type="match status" value="1"/>
</dbReference>
<dbReference type="SUPFAM" id="SSF50249">
    <property type="entry name" value="Nucleic acid-binding proteins"/>
    <property type="match status" value="1"/>
</dbReference>
<dbReference type="SUPFAM" id="SSF89550">
    <property type="entry name" value="PHP domain-like"/>
    <property type="match status" value="1"/>
</dbReference>
<dbReference type="SUPFAM" id="SSF53098">
    <property type="entry name" value="Ribonuclease H-like"/>
    <property type="match status" value="1"/>
</dbReference>
<accession>Q1JEV4</accession>
<evidence type="ECO:0000255" key="1">
    <source>
        <dbReference type="HAMAP-Rule" id="MF_00356"/>
    </source>
</evidence>
<reference key="1">
    <citation type="journal article" date="2006" name="Proc. Natl. Acad. Sci. U.S.A.">
        <title>Molecular genetic anatomy of inter- and intraserotype variation in the human bacterial pathogen group A Streptococcus.</title>
        <authorList>
            <person name="Beres S.B."/>
            <person name="Richter E.W."/>
            <person name="Nagiec M.J."/>
            <person name="Sumby P."/>
            <person name="Porcella S.F."/>
            <person name="DeLeo F.R."/>
            <person name="Musser J.M."/>
        </authorList>
    </citation>
    <scope>NUCLEOTIDE SEQUENCE [LARGE SCALE GENOMIC DNA]</scope>
    <source>
        <strain>MGAS10270</strain>
    </source>
</reference>
<feature type="chain" id="PRO_1000048486" description="DNA polymerase III PolC-type">
    <location>
        <begin position="1"/>
        <end position="1465"/>
    </location>
</feature>
<feature type="domain" description="Exonuclease">
    <location>
        <begin position="427"/>
        <end position="583"/>
    </location>
</feature>
<proteinExistence type="inferred from homology"/>
<comment type="function">
    <text evidence="1">Required for replicative DNA synthesis. This DNA polymerase also exhibits 3' to 5' exonuclease activity.</text>
</comment>
<comment type="catalytic activity">
    <reaction evidence="1">
        <text>DNA(n) + a 2'-deoxyribonucleoside 5'-triphosphate = DNA(n+1) + diphosphate</text>
        <dbReference type="Rhea" id="RHEA:22508"/>
        <dbReference type="Rhea" id="RHEA-COMP:17339"/>
        <dbReference type="Rhea" id="RHEA-COMP:17340"/>
        <dbReference type="ChEBI" id="CHEBI:33019"/>
        <dbReference type="ChEBI" id="CHEBI:61560"/>
        <dbReference type="ChEBI" id="CHEBI:173112"/>
        <dbReference type="EC" id="2.7.7.7"/>
    </reaction>
</comment>
<comment type="subcellular location">
    <subcellularLocation>
        <location evidence="1">Cytoplasm</location>
    </subcellularLocation>
</comment>
<comment type="similarity">
    <text evidence="1">Belongs to the DNA polymerase type-C family. PolC subfamily.</text>
</comment>
<organism>
    <name type="scientific">Streptococcus pyogenes serotype M2 (strain MGAS10270)</name>
    <dbReference type="NCBI Taxonomy" id="370552"/>
    <lineage>
        <taxon>Bacteria</taxon>
        <taxon>Bacillati</taxon>
        <taxon>Bacillota</taxon>
        <taxon>Bacilli</taxon>
        <taxon>Lactobacillales</taxon>
        <taxon>Streptococcaceae</taxon>
        <taxon>Streptococcus</taxon>
    </lineage>
</organism>